<keyword id="KW-0333">Golgi apparatus</keyword>
<keyword id="KW-0472">Membrane</keyword>
<keyword id="KW-0653">Protein transport</keyword>
<keyword id="KW-1185">Reference proteome</keyword>
<keyword id="KW-0812">Transmembrane</keyword>
<keyword id="KW-1133">Transmembrane helix</keyword>
<keyword id="KW-0813">Transport</keyword>
<proteinExistence type="inferred from homology"/>
<dbReference type="EMBL" id="DP000045">
    <property type="protein sequence ID" value="ABO52996.1"/>
    <property type="molecule type" value="Genomic_DNA"/>
</dbReference>
<dbReference type="RefSeq" id="NP_001162048.1">
    <property type="nucleotide sequence ID" value="NM_001168576.1"/>
</dbReference>
<dbReference type="SMR" id="A4K2W1"/>
<dbReference type="FunCoup" id="A4K2W1">
    <property type="interactions" value="1312"/>
</dbReference>
<dbReference type="Ensembl" id="ENSPPYT00000040006.1">
    <property type="protein sequence ID" value="ENSPPYP00000037840.1"/>
    <property type="gene ID" value="ENSPPYG00000036501.1"/>
</dbReference>
<dbReference type="GeneID" id="100137180"/>
<dbReference type="KEGG" id="pon:100137180"/>
<dbReference type="CTD" id="90196"/>
<dbReference type="GeneTree" id="ENSGT00940000154347"/>
<dbReference type="InParanoid" id="A4K2W1"/>
<dbReference type="OMA" id="EYEMVGM"/>
<dbReference type="OrthoDB" id="542931at2759"/>
<dbReference type="Proteomes" id="UP000001595">
    <property type="component" value="Chromosome 20"/>
</dbReference>
<dbReference type="GO" id="GO:0005829">
    <property type="term" value="C:cytosol"/>
    <property type="evidence" value="ECO:0007669"/>
    <property type="project" value="GOC"/>
</dbReference>
<dbReference type="GO" id="GO:0000139">
    <property type="term" value="C:Golgi membrane"/>
    <property type="evidence" value="ECO:0007669"/>
    <property type="project" value="UniProtKB-SubCell"/>
</dbReference>
<dbReference type="GO" id="GO:0005802">
    <property type="term" value="C:trans-Golgi network"/>
    <property type="evidence" value="ECO:0007669"/>
    <property type="project" value="TreeGrafter"/>
</dbReference>
<dbReference type="GO" id="GO:0006895">
    <property type="term" value="P:Golgi to endosome transport"/>
    <property type="evidence" value="ECO:0007669"/>
    <property type="project" value="TreeGrafter"/>
</dbReference>
<dbReference type="GO" id="GO:0043001">
    <property type="term" value="P:Golgi to plasma membrane protein transport"/>
    <property type="evidence" value="ECO:0007669"/>
    <property type="project" value="TreeGrafter"/>
</dbReference>
<dbReference type="GO" id="GO:0034067">
    <property type="term" value="P:protein localization to Golgi apparatus"/>
    <property type="evidence" value="ECO:0007669"/>
    <property type="project" value="TreeGrafter"/>
</dbReference>
<dbReference type="InterPro" id="IPR016973">
    <property type="entry name" value="Integral_membrane_SYS1"/>
</dbReference>
<dbReference type="InterPro" id="IPR019185">
    <property type="entry name" value="Integral_membrane_SYS1-rel"/>
</dbReference>
<dbReference type="PANTHER" id="PTHR12952:SF0">
    <property type="entry name" value="PROTEIN SYS1 HOMOLOG"/>
    <property type="match status" value="1"/>
</dbReference>
<dbReference type="PANTHER" id="PTHR12952">
    <property type="entry name" value="SYS1"/>
    <property type="match status" value="1"/>
</dbReference>
<dbReference type="Pfam" id="PF09801">
    <property type="entry name" value="SYS1"/>
    <property type="match status" value="1"/>
</dbReference>
<dbReference type="PIRSF" id="PIRSF031402">
    <property type="entry name" value="SYS1_homologue"/>
    <property type="match status" value="1"/>
</dbReference>
<feature type="chain" id="PRO_0000329298" description="Protein SYS1 homolog">
    <location>
        <begin position="1"/>
        <end position="156"/>
    </location>
</feature>
<feature type="transmembrane region" description="Helical" evidence="2">
    <location>
        <begin position="13"/>
        <end position="33"/>
    </location>
</feature>
<feature type="transmembrane region" description="Helical" evidence="2">
    <location>
        <begin position="65"/>
        <end position="85"/>
    </location>
</feature>
<feature type="transmembrane region" description="Helical" evidence="2">
    <location>
        <begin position="91"/>
        <end position="111"/>
    </location>
</feature>
<feature type="transmembrane region" description="Helical" evidence="2">
    <location>
        <begin position="113"/>
        <end position="133"/>
    </location>
</feature>
<comment type="function">
    <text evidence="1">Involved in protein trafficking. May serve as a receptor for ARFRP1 (By similarity).</text>
</comment>
<comment type="subunit">
    <text evidence="1">Interacts with ARFRP1.</text>
</comment>
<comment type="subcellular location">
    <subcellularLocation>
        <location evidence="1">Golgi apparatus membrane</location>
        <topology evidence="1">Multi-pass membrane protein</topology>
    </subcellularLocation>
</comment>
<comment type="similarity">
    <text evidence="3">Belongs to the SYS1 family.</text>
</comment>
<accession>A4K2W1</accession>
<protein>
    <recommendedName>
        <fullName>Protein SYS1 homolog</fullName>
    </recommendedName>
</protein>
<evidence type="ECO:0000250" key="1"/>
<evidence type="ECO:0000255" key="2"/>
<evidence type="ECO:0000305" key="3"/>
<organism>
    <name type="scientific">Pongo abelii</name>
    <name type="common">Sumatran orangutan</name>
    <name type="synonym">Pongo pygmaeus abelii</name>
    <dbReference type="NCBI Taxonomy" id="9601"/>
    <lineage>
        <taxon>Eukaryota</taxon>
        <taxon>Metazoa</taxon>
        <taxon>Chordata</taxon>
        <taxon>Craniata</taxon>
        <taxon>Vertebrata</taxon>
        <taxon>Euteleostomi</taxon>
        <taxon>Mammalia</taxon>
        <taxon>Eutheria</taxon>
        <taxon>Euarchontoglires</taxon>
        <taxon>Primates</taxon>
        <taxon>Haplorrhini</taxon>
        <taxon>Catarrhini</taxon>
        <taxon>Hominidae</taxon>
        <taxon>Pongo</taxon>
    </lineage>
</organism>
<name>SYS1_PONAB</name>
<reference key="1">
    <citation type="journal article" date="2007" name="Genome Res.">
        <title>Comparative sequence analyses reveal rapid and divergent evolutionary changes of the WFDC locus in the primate lineage.</title>
        <authorList>
            <consortium name="NISC comparative sequencing program"/>
            <person name="Hurle B."/>
            <person name="Swanson W."/>
            <person name="Green E.D."/>
        </authorList>
    </citation>
    <scope>NUCLEOTIDE SEQUENCE [GENOMIC DNA]</scope>
</reference>
<gene>
    <name type="primary">SYS1</name>
</gene>
<sequence>MAGQFRSYVWDPLLILSQIVLMQTVYYGSLGLWLALVDGLVRSSPSLDQMFDAEILGFSTPPGRLSMMSFILNALTCALGLLYFIRRGKQCLDFTVTVHFFHLLGCWFYSSRFPSALTWWLVQAVCIALMAVIGEYLCMRTELKEIPLNSAPKSNV</sequence>